<name>ACNA_STAAW</name>
<sequence length="901" mass="98970">MAANFKEQSKKHFDLNGQSYTYYDLKAVEEQGITKVSNLPYSIRVLLESLLRQEDDFVITDDHIKALSQFGKDGNEGEVPFKPSRVILQDFTGVPAVVDLASLRKAMDDVGGDITKINPEVPVDLVIDHSVQVDSYANPEALERNMKLEFERNYERYQFLNWATKAFDNYNAVPPATGIVHQVNLEYLASVVHVRDVDGEKTAFPDTLVGTDSHTTMINGIGVLGWGVGGIEAEAGMLGQPSYFPIPEVIGVRLVNSLPQGATATDLALRVTQELRKKGVVGKFVEFFGPGVQHLPLADRATIANMAPEYGATCGFFPVDDESLKYMKLTGRSDEHIALVKEYLKQNHMFFDVEKEDPNYTDVIELDLSTVEASLSGPKRPQDLIFLSDMKSSFENSVTAPAGNQGHGLDKSEFDKKAEINFKDGSKATMKTGDIAIAAITSCTNTSNPYVMLGAGLVAKKAVEKGLKVPEYVKTSLAPGSKVVTGYLRDAGLQPYLDDLGFNLVGYGCTTCIGNSGPLLPEIEKAIADEDLLVTSVLSGNRNFEGRIHPLVKANYLASPQLVVAYALAGTVDIDLQNEPIGKGNDGEDVYLKDIWPSIKEVSDTVDSVVTPELFIEEYNNVYNNNELWNEIDVTDQPLYDFDPNSTYIQNPSFFQGLSKEPGTIVPLNGLRVMGKFGDSVTTDHISPAGAIGKDTPAGKYLQDHQVPIREFNSYGSRRGNHEVMVRGTFANIRIKNQLAPGTEGGFTTYWPTNEVMPIFDAAMKYKEDGTGLVVLAGNDYGMGSSRDWAAKGTNLLGVKTVIAQSYERIHRSNLVMMGVLPLEFKKGESADSLGLDGTEEISVNIDENVQPHDYVKVTAKKQDGDLVEFDAMVRFDSLVEMDYYRHGGILQMVLRNKLAQ</sequence>
<proteinExistence type="inferred from homology"/>
<keyword id="KW-0408">Iron</keyword>
<keyword id="KW-0411">Iron-sulfur</keyword>
<keyword id="KW-0456">Lyase</keyword>
<keyword id="KW-0479">Metal-binding</keyword>
<keyword id="KW-0694">RNA-binding</keyword>
<keyword id="KW-0816">Tricarboxylic acid cycle</keyword>
<comment type="function">
    <text evidence="1 3">Involved in the catabolism of short chain fatty acids (SCFA) via the tricarboxylic acid (TCA)(acetyl degradation route) and probably the 2-methylcitrate cycle I (propionate degradation route). Catalyzes the reversible isomerization of citrate to isocitrate via cis-aconitate. Could catalyze the hydration of 2-methyl-cis-aconitate to yield (2R,3S)-2-methylisocitrate. The apo form of AcnA functions as a RNA-binding regulatory protein.</text>
</comment>
<comment type="catalytic activity">
    <reaction evidence="3">
        <text>citrate = D-threo-isocitrate</text>
        <dbReference type="Rhea" id="RHEA:10336"/>
        <dbReference type="ChEBI" id="CHEBI:15562"/>
        <dbReference type="ChEBI" id="CHEBI:16947"/>
        <dbReference type="EC" id="4.2.1.3"/>
    </reaction>
</comment>
<comment type="catalytic activity">
    <reaction evidence="3">
        <text>(2S,3R)-3-hydroxybutane-1,2,3-tricarboxylate = 2-methyl-cis-aconitate + H2O</text>
        <dbReference type="Rhea" id="RHEA:17941"/>
        <dbReference type="ChEBI" id="CHEBI:15377"/>
        <dbReference type="ChEBI" id="CHEBI:57429"/>
        <dbReference type="ChEBI" id="CHEBI:57872"/>
        <dbReference type="EC" id="4.2.1.99"/>
    </reaction>
</comment>
<comment type="cofactor">
    <cofactor evidence="1">
        <name>[4Fe-4S] cluster</name>
        <dbReference type="ChEBI" id="CHEBI:49883"/>
    </cofactor>
    <text evidence="1">Binds 1 [4Fe-4S] cluster per subunit.</text>
</comment>
<comment type="pathway">
    <text evidence="3">Carbohydrate metabolism; tricarboxylic acid cycle; isocitrate from oxaloacetate: step 2/2.</text>
</comment>
<comment type="pathway">
    <text evidence="3">Organic acid metabolism; propanoate degradation.</text>
</comment>
<comment type="subunit">
    <text evidence="1">Monomer.</text>
</comment>
<comment type="similarity">
    <text evidence="4">Belongs to the aconitase/IPM isomerase family.</text>
</comment>
<gene>
    <name type="primary">acnA</name>
    <name type="synonym">citB</name>
    <name type="ordered locus">MW1237</name>
</gene>
<organism>
    <name type="scientific">Staphylococcus aureus (strain MW2)</name>
    <dbReference type="NCBI Taxonomy" id="196620"/>
    <lineage>
        <taxon>Bacteria</taxon>
        <taxon>Bacillati</taxon>
        <taxon>Bacillota</taxon>
        <taxon>Bacilli</taxon>
        <taxon>Bacillales</taxon>
        <taxon>Staphylococcaceae</taxon>
        <taxon>Staphylococcus</taxon>
    </lineage>
</organism>
<evidence type="ECO:0000250" key="1">
    <source>
        <dbReference type="UniProtKB" id="P09339"/>
    </source>
</evidence>
<evidence type="ECO:0000250" key="2">
    <source>
        <dbReference type="UniProtKB" id="P36683"/>
    </source>
</evidence>
<evidence type="ECO:0000250" key="3">
    <source>
        <dbReference type="UniProtKB" id="Q8ZP52"/>
    </source>
</evidence>
<evidence type="ECO:0000305" key="4"/>
<reference key="1">
    <citation type="journal article" date="2002" name="Lancet">
        <title>Genome and virulence determinants of high virulence community-acquired MRSA.</title>
        <authorList>
            <person name="Baba T."/>
            <person name="Takeuchi F."/>
            <person name="Kuroda M."/>
            <person name="Yuzawa H."/>
            <person name="Aoki K."/>
            <person name="Oguchi A."/>
            <person name="Nagai Y."/>
            <person name="Iwama N."/>
            <person name="Asano K."/>
            <person name="Naimi T."/>
            <person name="Kuroda H."/>
            <person name="Cui L."/>
            <person name="Yamamoto K."/>
            <person name="Hiramatsu K."/>
        </authorList>
    </citation>
    <scope>NUCLEOTIDE SEQUENCE [LARGE SCALE GENOMIC DNA]</scope>
    <source>
        <strain>MW2</strain>
    </source>
</reference>
<dbReference type="EC" id="4.2.1.3" evidence="3"/>
<dbReference type="EC" id="4.2.1.99" evidence="3"/>
<dbReference type="EMBL" id="BA000033">
    <property type="protein sequence ID" value="BAB95102.1"/>
    <property type="molecule type" value="Genomic_DNA"/>
</dbReference>
<dbReference type="RefSeq" id="WP_000729744.1">
    <property type="nucleotide sequence ID" value="NC_003923.1"/>
</dbReference>
<dbReference type="SMR" id="P63434"/>
<dbReference type="KEGG" id="sam:MW1237"/>
<dbReference type="HOGENOM" id="CLU_013476_2_1_9"/>
<dbReference type="UniPathway" id="UPA00223">
    <property type="reaction ID" value="UER00718"/>
</dbReference>
<dbReference type="UniPathway" id="UPA00946"/>
<dbReference type="GO" id="GO:0047456">
    <property type="term" value="F:2-methylisocitrate dehydratase activity"/>
    <property type="evidence" value="ECO:0000250"/>
    <property type="project" value="UniProtKB"/>
</dbReference>
<dbReference type="GO" id="GO:0051539">
    <property type="term" value="F:4 iron, 4 sulfur cluster binding"/>
    <property type="evidence" value="ECO:0000250"/>
    <property type="project" value="UniProtKB"/>
</dbReference>
<dbReference type="GO" id="GO:0003994">
    <property type="term" value="F:aconitate hydratase activity"/>
    <property type="evidence" value="ECO:0000250"/>
    <property type="project" value="UniProtKB"/>
</dbReference>
<dbReference type="GO" id="GO:0046872">
    <property type="term" value="F:metal ion binding"/>
    <property type="evidence" value="ECO:0007669"/>
    <property type="project" value="UniProtKB-KW"/>
</dbReference>
<dbReference type="GO" id="GO:0003730">
    <property type="term" value="F:mRNA 3'-UTR binding"/>
    <property type="evidence" value="ECO:0000250"/>
    <property type="project" value="UniProtKB"/>
</dbReference>
<dbReference type="GO" id="GO:0003729">
    <property type="term" value="F:mRNA binding"/>
    <property type="evidence" value="ECO:0000250"/>
    <property type="project" value="UniProtKB"/>
</dbReference>
<dbReference type="GO" id="GO:0019679">
    <property type="term" value="P:propionate metabolic process, methylcitrate cycle"/>
    <property type="evidence" value="ECO:0000250"/>
    <property type="project" value="UniProtKB"/>
</dbReference>
<dbReference type="GO" id="GO:0006099">
    <property type="term" value="P:tricarboxylic acid cycle"/>
    <property type="evidence" value="ECO:0000250"/>
    <property type="project" value="UniProtKB"/>
</dbReference>
<dbReference type="CDD" id="cd01586">
    <property type="entry name" value="AcnA_IRP"/>
    <property type="match status" value="1"/>
</dbReference>
<dbReference type="CDD" id="cd01580">
    <property type="entry name" value="AcnA_IRP_Swivel"/>
    <property type="match status" value="1"/>
</dbReference>
<dbReference type="FunFam" id="3.20.19.10:FF:000001">
    <property type="entry name" value="Aconitate hydratase"/>
    <property type="match status" value="1"/>
</dbReference>
<dbReference type="FunFam" id="3.30.499.10:FF:000002">
    <property type="entry name" value="Aconitate hydratase"/>
    <property type="match status" value="1"/>
</dbReference>
<dbReference type="FunFam" id="3.30.499.10:FF:000005">
    <property type="entry name" value="cytoplasmic aconitate hydratase"/>
    <property type="match status" value="1"/>
</dbReference>
<dbReference type="Gene3D" id="6.10.190.10">
    <property type="match status" value="1"/>
</dbReference>
<dbReference type="Gene3D" id="3.30.499.10">
    <property type="entry name" value="Aconitase, domain 3"/>
    <property type="match status" value="2"/>
</dbReference>
<dbReference type="Gene3D" id="3.20.19.10">
    <property type="entry name" value="Aconitase, domain 4"/>
    <property type="match status" value="1"/>
</dbReference>
<dbReference type="InterPro" id="IPR044137">
    <property type="entry name" value="AcnA_IRP_Swivel"/>
</dbReference>
<dbReference type="InterPro" id="IPR015931">
    <property type="entry name" value="Acnase/IPM_dHydase_lsu_aba_1/3"/>
</dbReference>
<dbReference type="InterPro" id="IPR001030">
    <property type="entry name" value="Acoase/IPM_deHydtase_lsu_aba"/>
</dbReference>
<dbReference type="InterPro" id="IPR015928">
    <property type="entry name" value="Aconitase/3IPM_dehydase_swvl"/>
</dbReference>
<dbReference type="InterPro" id="IPR006249">
    <property type="entry name" value="Aconitase/IRP2"/>
</dbReference>
<dbReference type="InterPro" id="IPR018136">
    <property type="entry name" value="Aconitase_4Fe-4S_BS"/>
</dbReference>
<dbReference type="InterPro" id="IPR036008">
    <property type="entry name" value="Aconitase_4Fe-4S_dom"/>
</dbReference>
<dbReference type="InterPro" id="IPR000573">
    <property type="entry name" value="AconitaseA/IPMdHydase_ssu_swvl"/>
</dbReference>
<dbReference type="NCBIfam" id="TIGR01341">
    <property type="entry name" value="aconitase_1"/>
    <property type="match status" value="1"/>
</dbReference>
<dbReference type="NCBIfam" id="NF006757">
    <property type="entry name" value="PRK09277.1"/>
    <property type="match status" value="1"/>
</dbReference>
<dbReference type="NCBIfam" id="NF009520">
    <property type="entry name" value="PRK12881.1"/>
    <property type="match status" value="1"/>
</dbReference>
<dbReference type="PANTHER" id="PTHR11670">
    <property type="entry name" value="ACONITASE/IRON-RESPONSIVE ELEMENT FAMILY MEMBER"/>
    <property type="match status" value="1"/>
</dbReference>
<dbReference type="Pfam" id="PF00330">
    <property type="entry name" value="Aconitase"/>
    <property type="match status" value="1"/>
</dbReference>
<dbReference type="Pfam" id="PF00694">
    <property type="entry name" value="Aconitase_C"/>
    <property type="match status" value="1"/>
</dbReference>
<dbReference type="PRINTS" id="PR00415">
    <property type="entry name" value="ACONITASE"/>
</dbReference>
<dbReference type="SUPFAM" id="SSF53732">
    <property type="entry name" value="Aconitase iron-sulfur domain"/>
    <property type="match status" value="1"/>
</dbReference>
<dbReference type="SUPFAM" id="SSF52016">
    <property type="entry name" value="LeuD/IlvD-like"/>
    <property type="match status" value="1"/>
</dbReference>
<dbReference type="PROSITE" id="PS00450">
    <property type="entry name" value="ACONITASE_1"/>
    <property type="match status" value="1"/>
</dbReference>
<dbReference type="PROSITE" id="PS01244">
    <property type="entry name" value="ACONITASE_2"/>
    <property type="match status" value="1"/>
</dbReference>
<protein>
    <recommendedName>
        <fullName evidence="3">Aconitate hydratase A</fullName>
        <shortName evidence="3">ACN</shortName>
        <shortName evidence="3">Aconitase</shortName>
        <ecNumber evidence="3">4.2.1.3</ecNumber>
    </recommendedName>
    <alternativeName>
        <fullName evidence="3">(2R,3S)-2-methylisocitrate dehydratase</fullName>
    </alternativeName>
    <alternativeName>
        <fullName evidence="3">(2S,3R)-3-hydroxybutane-1,2,3-tricarboxylate dehydratase</fullName>
    </alternativeName>
    <alternativeName>
        <fullName evidence="1">Iron-responsive protein-like</fullName>
        <shortName evidence="1">IRP-like</shortName>
    </alternativeName>
    <alternativeName>
        <fullName evidence="3">Probable 2-methyl-cis-aconitate hydratase</fullName>
        <ecNumber evidence="3">4.2.1.99</ecNumber>
    </alternativeName>
    <alternativeName>
        <fullName evidence="1">RNA-binding protein</fullName>
    </alternativeName>
</protein>
<accession>P63434</accession>
<accession>Q99UC8</accession>
<feature type="chain" id="PRO_0000076671" description="Aconitate hydratase A">
    <location>
        <begin position="1"/>
        <end position="901"/>
    </location>
</feature>
<feature type="binding site" evidence="2">
    <location>
        <position position="443"/>
    </location>
    <ligand>
        <name>[4Fe-4S] cluster</name>
        <dbReference type="ChEBI" id="CHEBI:49883"/>
    </ligand>
</feature>
<feature type="binding site" evidence="2">
    <location>
        <position position="509"/>
    </location>
    <ligand>
        <name>[4Fe-4S] cluster</name>
        <dbReference type="ChEBI" id="CHEBI:49883"/>
    </ligand>
</feature>
<feature type="binding site" evidence="2">
    <location>
        <position position="512"/>
    </location>
    <ligand>
        <name>[4Fe-4S] cluster</name>
        <dbReference type="ChEBI" id="CHEBI:49883"/>
    </ligand>
</feature>